<dbReference type="EMBL" id="U00096">
    <property type="protein sequence ID" value="AAC74741.4"/>
    <property type="molecule type" value="Genomic_DNA"/>
</dbReference>
<dbReference type="EMBL" id="U68703">
    <property type="protein sequence ID" value="AAB47947.1"/>
    <property type="status" value="ALT_INIT"/>
    <property type="molecule type" value="Genomic_DNA"/>
</dbReference>
<dbReference type="EMBL" id="AP009048">
    <property type="protein sequence ID" value="BAA15443.2"/>
    <property type="molecule type" value="Genomic_DNA"/>
</dbReference>
<dbReference type="PIR" id="G64924">
    <property type="entry name" value="G64924"/>
</dbReference>
<dbReference type="RefSeq" id="NP_416186.4">
    <property type="nucleotide sequence ID" value="NC_000913.3"/>
</dbReference>
<dbReference type="RefSeq" id="WP_001310861.1">
    <property type="nucleotide sequence ID" value="NZ_STEB01000003.1"/>
</dbReference>
<dbReference type="SMR" id="P77375"/>
<dbReference type="BioGRID" id="4263343">
    <property type="interactions" value="24"/>
</dbReference>
<dbReference type="DIP" id="DIP-48159N"/>
<dbReference type="FunCoup" id="P77375">
    <property type="interactions" value="26"/>
</dbReference>
<dbReference type="STRING" id="511145.b1671"/>
<dbReference type="PaxDb" id="511145-b1671"/>
<dbReference type="EnsemblBacteria" id="AAC74741">
    <property type="protein sequence ID" value="AAC74741"/>
    <property type="gene ID" value="b1671"/>
</dbReference>
<dbReference type="GeneID" id="947308"/>
<dbReference type="KEGG" id="ecj:JW5271"/>
<dbReference type="KEGG" id="eco:b1671"/>
<dbReference type="KEGG" id="ecoc:C3026_09580"/>
<dbReference type="PATRIC" id="fig|1411691.4.peg.588"/>
<dbReference type="EchoBASE" id="EB3716"/>
<dbReference type="eggNOG" id="COG0437">
    <property type="taxonomic scope" value="Bacteria"/>
</dbReference>
<dbReference type="HOGENOM" id="CLU_043374_1_3_6"/>
<dbReference type="InParanoid" id="P77375"/>
<dbReference type="OMA" id="TNHAPAQ"/>
<dbReference type="OrthoDB" id="9779457at2"/>
<dbReference type="PhylomeDB" id="P77375"/>
<dbReference type="BioCyc" id="EcoCyc:G6899-MONOMER"/>
<dbReference type="PHI-base" id="PHI:10998"/>
<dbReference type="PRO" id="PR:P77375"/>
<dbReference type="Proteomes" id="UP000000625">
    <property type="component" value="Chromosome"/>
</dbReference>
<dbReference type="GO" id="GO:0030288">
    <property type="term" value="C:outer membrane-bounded periplasmic space"/>
    <property type="evidence" value="ECO:0000314"/>
    <property type="project" value="EcoCyc"/>
</dbReference>
<dbReference type="GO" id="GO:0051539">
    <property type="term" value="F:4 iron, 4 sulfur cluster binding"/>
    <property type="evidence" value="ECO:0007669"/>
    <property type="project" value="UniProtKB-KW"/>
</dbReference>
<dbReference type="GO" id="GO:0046872">
    <property type="term" value="F:metal ion binding"/>
    <property type="evidence" value="ECO:0007669"/>
    <property type="project" value="UniProtKB-KW"/>
</dbReference>
<dbReference type="CDD" id="cd10551">
    <property type="entry name" value="PsrB"/>
    <property type="match status" value="1"/>
</dbReference>
<dbReference type="FunFam" id="3.30.70.20:FF:000014">
    <property type="entry name" value="Cytochrome c nitrite reductase, Fe-S protein"/>
    <property type="match status" value="1"/>
</dbReference>
<dbReference type="Gene3D" id="3.30.70.20">
    <property type="match status" value="2"/>
</dbReference>
<dbReference type="InterPro" id="IPR017896">
    <property type="entry name" value="4Fe4S_Fe-S-bd"/>
</dbReference>
<dbReference type="InterPro" id="IPR017900">
    <property type="entry name" value="4Fe4S_Fe_S_CS"/>
</dbReference>
<dbReference type="InterPro" id="IPR050954">
    <property type="entry name" value="ET_IronSulfur_Cluster-Binding"/>
</dbReference>
<dbReference type="PANTHER" id="PTHR43177">
    <property type="entry name" value="PROTEIN NRFC"/>
    <property type="match status" value="1"/>
</dbReference>
<dbReference type="PANTHER" id="PTHR43177:SF3">
    <property type="entry name" value="PROTEIN NRFC HOMOLOG"/>
    <property type="match status" value="1"/>
</dbReference>
<dbReference type="Pfam" id="PF13247">
    <property type="entry name" value="Fer4_11"/>
    <property type="match status" value="1"/>
</dbReference>
<dbReference type="SUPFAM" id="SSF54862">
    <property type="entry name" value="4Fe-4S ferredoxins"/>
    <property type="match status" value="1"/>
</dbReference>
<dbReference type="PROSITE" id="PS00198">
    <property type="entry name" value="4FE4S_FER_1"/>
    <property type="match status" value="1"/>
</dbReference>
<dbReference type="PROSITE" id="PS51379">
    <property type="entry name" value="4FE4S_FER_2"/>
    <property type="match status" value="3"/>
</dbReference>
<keyword id="KW-0004">4Fe-4S</keyword>
<keyword id="KW-0408">Iron</keyword>
<keyword id="KW-0411">Iron-sulfur</keyword>
<keyword id="KW-0479">Metal-binding</keyword>
<keyword id="KW-1185">Reference proteome</keyword>
<keyword id="KW-0677">Repeat</keyword>
<keyword id="KW-0732">Signal</keyword>
<comment type="induction">
    <text evidence="4">Up-regulated by the oxygen-responsive transcription factor FNR under anaerobic conditions. Repressed in the presence of nitrate or nitrite via the two-component systems NarXL and NarPQ, respectively.</text>
</comment>
<comment type="PTM">
    <text>Exported by the Tat system. The position of the signal peptide cleavage has not been experimentally proven. Can also be exported by the Sec system.</text>
</comment>
<comment type="sequence caution" evidence="5">
    <conflict type="erroneous initiation">
        <sequence resource="EMBL-CDS" id="AAB47947"/>
    </conflict>
</comment>
<organism>
    <name type="scientific">Escherichia coli (strain K12)</name>
    <dbReference type="NCBI Taxonomy" id="83333"/>
    <lineage>
        <taxon>Bacteria</taxon>
        <taxon>Pseudomonadati</taxon>
        <taxon>Pseudomonadota</taxon>
        <taxon>Gammaproteobacteria</taxon>
        <taxon>Enterobacterales</taxon>
        <taxon>Enterobacteriaceae</taxon>
        <taxon>Escherichia</taxon>
    </lineage>
</organism>
<protein>
    <recommendedName>
        <fullName>Uncharacterized ferredoxin-like protein YdhX</fullName>
    </recommendedName>
</protein>
<evidence type="ECO:0000250" key="1"/>
<evidence type="ECO:0000255" key="2"/>
<evidence type="ECO:0000255" key="3">
    <source>
        <dbReference type="PROSITE-ProRule" id="PRU00711"/>
    </source>
</evidence>
<evidence type="ECO:0000269" key="4">
    <source>
    </source>
</evidence>
<evidence type="ECO:0000305" key="5"/>
<sequence length="222" mass="25093">MSFTRRKFVLGMGTVIFFTGSASSLLANTRQEKEVRYAMIHDESRCNGCNICARACRKTNHVPAQGSRLSIAHIPVTDNDNETQYHFFRQSCQHCEDAPCIDVCPTGASWRDEQGIVRVEKSQCIGCSYCIGACPYQVRYLNPVTKVADKCDFCAESRLAKGFPPICVSACPEHALIFGREDSPEIQAWLQQNKYYQYQLPGAGKPHLYRRFGQHLIKKENV</sequence>
<proteinExistence type="evidence at transcript level"/>
<accession>P77375</accession>
<gene>
    <name type="primary">ydhX</name>
    <name type="ordered locus">b1671</name>
    <name type="ordered locus">JW5271</name>
</gene>
<reference key="1">
    <citation type="journal article" date="1996" name="DNA Res.">
        <title>A 460-kb DNA sequence of the Escherichia coli K-12 genome corresponding to the 40.1-50.0 min region on the linkage map.</title>
        <authorList>
            <person name="Itoh T."/>
            <person name="Aiba H."/>
            <person name="Baba T."/>
            <person name="Fujita K."/>
            <person name="Hayashi K."/>
            <person name="Inada T."/>
            <person name="Isono K."/>
            <person name="Kasai H."/>
            <person name="Kimura S."/>
            <person name="Kitakawa M."/>
            <person name="Kitagawa M."/>
            <person name="Makino K."/>
            <person name="Miki T."/>
            <person name="Mizobuchi K."/>
            <person name="Mori H."/>
            <person name="Mori T."/>
            <person name="Motomura K."/>
            <person name="Nakade S."/>
            <person name="Nakamura Y."/>
            <person name="Nashimoto H."/>
            <person name="Nishio Y."/>
            <person name="Oshima T."/>
            <person name="Saito N."/>
            <person name="Sampei G."/>
            <person name="Seki Y."/>
            <person name="Sivasundaram S."/>
            <person name="Tagami H."/>
            <person name="Takeda J."/>
            <person name="Takemoto K."/>
            <person name="Wada C."/>
            <person name="Yamamoto Y."/>
            <person name="Horiuchi T."/>
        </authorList>
    </citation>
    <scope>NUCLEOTIDE SEQUENCE [LARGE SCALE GENOMIC DNA]</scope>
    <source>
        <strain>K12 / W3110 / ATCC 27325 / DSM 5911</strain>
    </source>
</reference>
<reference key="2">
    <citation type="journal article" date="1997" name="Science">
        <title>The complete genome sequence of Escherichia coli K-12.</title>
        <authorList>
            <person name="Blattner F.R."/>
            <person name="Plunkett G. III"/>
            <person name="Bloch C.A."/>
            <person name="Perna N.T."/>
            <person name="Burland V."/>
            <person name="Riley M."/>
            <person name="Collado-Vides J."/>
            <person name="Glasner J.D."/>
            <person name="Rode C.K."/>
            <person name="Mayhew G.F."/>
            <person name="Gregor J."/>
            <person name="Davis N.W."/>
            <person name="Kirkpatrick H.A."/>
            <person name="Goeden M.A."/>
            <person name="Rose D.J."/>
            <person name="Mau B."/>
            <person name="Shao Y."/>
        </authorList>
    </citation>
    <scope>NUCLEOTIDE SEQUENCE [LARGE SCALE GENOMIC DNA]</scope>
    <source>
        <strain>K12 / MG1655 / ATCC 47076</strain>
    </source>
</reference>
<reference key="3">
    <citation type="journal article" date="2006" name="Mol. Syst. Biol.">
        <title>Highly accurate genome sequences of Escherichia coli K-12 strains MG1655 and W3110.</title>
        <authorList>
            <person name="Hayashi K."/>
            <person name="Morooka N."/>
            <person name="Yamamoto Y."/>
            <person name="Fujita K."/>
            <person name="Isono K."/>
            <person name="Choi S."/>
            <person name="Ohtsubo E."/>
            <person name="Baba T."/>
            <person name="Wanner B.L."/>
            <person name="Mori H."/>
            <person name="Horiuchi T."/>
        </authorList>
    </citation>
    <scope>NUCLEOTIDE SEQUENCE [LARGE SCALE GENOMIC DNA]</scope>
    <source>
        <strain>K12 / W3110 / ATCC 27325 / DSM 5911</strain>
    </source>
</reference>
<reference key="4">
    <citation type="journal article" date="2007" name="J. Biol. Chem.">
        <title>Export pathway selectivity of Escherichia coli twin arginine translocation signal peptides.</title>
        <authorList>
            <person name="Tullman-Ercek D."/>
            <person name="DeLisa M.P."/>
            <person name="Kawarasaki Y."/>
            <person name="Iranpour P."/>
            <person name="Ribnicky B."/>
            <person name="Palmer T."/>
            <person name="Georgiou G."/>
        </authorList>
    </citation>
    <scope>EXPORT VIA THE TAT-SYSTEM AND THE SEC-SYSTEM</scope>
</reference>
<reference key="5">
    <citation type="journal article" date="2008" name="Microbiology">
        <title>Characterization of the Escherichia coli K-12 ydhYVWXUT operon: regulation by FNR, NarL and NarP.</title>
        <authorList>
            <person name="Partridge J.D."/>
            <person name="Browning D.F."/>
            <person name="Xu M."/>
            <person name="Newnham L.J."/>
            <person name="Scott C."/>
            <person name="Roberts R.E."/>
            <person name="Poole R.K."/>
            <person name="Green J."/>
        </authorList>
    </citation>
    <scope>INDUCTION</scope>
    <source>
        <strain>K12</strain>
    </source>
</reference>
<feature type="signal peptide" description="Tat-type signal" evidence="2">
    <location>
        <begin position="1"/>
        <end position="27"/>
    </location>
</feature>
<feature type="chain" id="PRO_0000159295" description="Uncharacterized ferredoxin-like protein YdhX">
    <location>
        <begin position="28"/>
        <end position="222"/>
    </location>
</feature>
<feature type="domain" description="4Fe-4S ferredoxin-type 1" evidence="3">
    <location>
        <begin position="37"/>
        <end position="67"/>
    </location>
</feature>
<feature type="domain" description="4Fe-4S ferredoxin-type 2" evidence="3">
    <location>
        <begin position="83"/>
        <end position="114"/>
    </location>
</feature>
<feature type="domain" description="4Fe-4S ferredoxin-type 3" evidence="3">
    <location>
        <begin position="115"/>
        <end position="144"/>
    </location>
</feature>
<feature type="binding site" evidence="1">
    <location>
        <position position="46"/>
    </location>
    <ligand>
        <name>[4Fe-4S] cluster</name>
        <dbReference type="ChEBI" id="CHEBI:49883"/>
        <label>1</label>
    </ligand>
</feature>
<feature type="binding site" evidence="1">
    <location>
        <position position="49"/>
    </location>
    <ligand>
        <name>[4Fe-4S] cluster</name>
        <dbReference type="ChEBI" id="CHEBI:49883"/>
        <label>1</label>
    </ligand>
</feature>
<feature type="binding site" evidence="1">
    <location>
        <position position="52"/>
    </location>
    <ligand>
        <name>[4Fe-4S] cluster</name>
        <dbReference type="ChEBI" id="CHEBI:49883"/>
        <label>1</label>
    </ligand>
</feature>
<feature type="binding site" evidence="1">
    <location>
        <position position="56"/>
    </location>
    <ligand>
        <name>[4Fe-4S] cluster</name>
        <dbReference type="ChEBI" id="CHEBI:49883"/>
        <label>2</label>
    </ligand>
</feature>
<feature type="binding site" evidence="1">
    <location>
        <position position="92"/>
    </location>
    <ligand>
        <name>[4Fe-4S] cluster</name>
        <dbReference type="ChEBI" id="CHEBI:49883"/>
        <label>3</label>
    </ligand>
</feature>
<feature type="binding site" evidence="1">
    <location>
        <position position="95"/>
    </location>
    <ligand>
        <name>[4Fe-4S] cluster</name>
        <dbReference type="ChEBI" id="CHEBI:49883"/>
        <label>3</label>
    </ligand>
</feature>
<feature type="binding site" evidence="1">
    <location>
        <position position="100"/>
    </location>
    <ligand>
        <name>[4Fe-4S] cluster</name>
        <dbReference type="ChEBI" id="CHEBI:49883"/>
        <label>3</label>
    </ligand>
</feature>
<feature type="binding site" evidence="1">
    <location>
        <position position="104"/>
    </location>
    <ligand>
        <name>[4Fe-4S] cluster</name>
        <dbReference type="ChEBI" id="CHEBI:49883"/>
        <label>4</label>
    </ligand>
</feature>
<feature type="binding site" evidence="1">
    <location>
        <position position="124"/>
    </location>
    <ligand>
        <name>[4Fe-4S] cluster</name>
        <dbReference type="ChEBI" id="CHEBI:49883"/>
        <label>4</label>
    </ligand>
</feature>
<feature type="binding site" evidence="1">
    <location>
        <position position="127"/>
    </location>
    <ligand>
        <name>[4Fe-4S] cluster</name>
        <dbReference type="ChEBI" id="CHEBI:49883"/>
        <label>4</label>
    </ligand>
</feature>
<feature type="binding site" evidence="1">
    <location>
        <position position="130"/>
    </location>
    <ligand>
        <name>[4Fe-4S] cluster</name>
        <dbReference type="ChEBI" id="CHEBI:49883"/>
        <label>4</label>
    </ligand>
</feature>
<feature type="binding site" evidence="1">
    <location>
        <position position="134"/>
    </location>
    <ligand>
        <name>[4Fe-4S] cluster</name>
        <dbReference type="ChEBI" id="CHEBI:49883"/>
        <label>3</label>
    </ligand>
</feature>
<feature type="binding site" evidence="1">
    <location>
        <position position="151"/>
    </location>
    <ligand>
        <name>[4Fe-4S] cluster</name>
        <dbReference type="ChEBI" id="CHEBI:49883"/>
        <label>2</label>
    </ligand>
</feature>
<feature type="binding site" evidence="1">
    <location>
        <position position="154"/>
    </location>
    <ligand>
        <name>[4Fe-4S] cluster</name>
        <dbReference type="ChEBI" id="CHEBI:49883"/>
        <label>2</label>
    </ligand>
</feature>
<feature type="binding site" evidence="1">
    <location>
        <position position="167"/>
    </location>
    <ligand>
        <name>[4Fe-4S] cluster</name>
        <dbReference type="ChEBI" id="CHEBI:49883"/>
        <label>2</label>
    </ligand>
</feature>
<feature type="binding site" evidence="1">
    <location>
        <position position="171"/>
    </location>
    <ligand>
        <name>[4Fe-4S] cluster</name>
        <dbReference type="ChEBI" id="CHEBI:49883"/>
        <label>1</label>
    </ligand>
</feature>
<name>YDHX_ECOLI</name>